<sequence length="466" mass="50073">MEVMPQPLTIVILAAGLGTRMKSRHAKVLHQAGGKTLLQHVIDTALELAPAERIFVVVGHQAEKVRQSVTTPGIGFIEQTEQKGTGHAVLIGRHALAGLDGHLMVLYGDCPLLRTETLRRLIAQAAEGPAAGVLLSAMMDDPYGYGRVIRDSRGHVLDVVEQKSGTPEQLAIKEANMGIYCFRAGLFWEHVGEIEPNNPAGEYYLTDMPAILHRAGHTVEAMRIDDPAEALGINDRAQLAEVDRIFRDRKRRAVMAAGVTLIQPETITIDPAAEIGQDSIIESFAQILGKTKIGENCRVGSCSIVSDSTLADEVHIGAFTIVTTSVLEHGVHAGPYARLRMENHVEAGAHIGNFVELKKTRMGKGAKANHLAYLGDSEIGARVNIGAGTITCNYDGFKKHRTGIGEGAFVGSNSTLVAPIDIGEGAYVAAGSVITNPVPPDALALGRARQEIKEEWAKKRRKLAKT</sequence>
<name>GLMU_SOLUE</name>
<organism>
    <name type="scientific">Solibacter usitatus (strain Ellin6076)</name>
    <dbReference type="NCBI Taxonomy" id="234267"/>
    <lineage>
        <taxon>Bacteria</taxon>
        <taxon>Pseudomonadati</taxon>
        <taxon>Acidobacteriota</taxon>
        <taxon>Terriglobia</taxon>
        <taxon>Bryobacterales</taxon>
        <taxon>Solibacteraceae</taxon>
        <taxon>Candidatus Solibacter</taxon>
    </lineage>
</organism>
<protein>
    <recommendedName>
        <fullName evidence="1">Bifunctional protein GlmU</fullName>
    </recommendedName>
    <domain>
        <recommendedName>
            <fullName evidence="1">UDP-N-acetylglucosamine pyrophosphorylase</fullName>
            <ecNumber evidence="1">2.7.7.23</ecNumber>
        </recommendedName>
        <alternativeName>
            <fullName evidence="1">N-acetylglucosamine-1-phosphate uridyltransferase</fullName>
        </alternativeName>
    </domain>
    <domain>
        <recommendedName>
            <fullName evidence="1">Glucosamine-1-phosphate N-acetyltransferase</fullName>
            <ecNumber evidence="1">2.3.1.157</ecNumber>
        </recommendedName>
    </domain>
</protein>
<proteinExistence type="inferred from homology"/>
<gene>
    <name evidence="1" type="primary">glmU</name>
    <name type="ordered locus">Acid_4364</name>
</gene>
<feature type="chain" id="PRO_1000088143" description="Bifunctional protein GlmU">
    <location>
        <begin position="1"/>
        <end position="466"/>
    </location>
</feature>
<feature type="region of interest" description="Pyrophosphorylase" evidence="1">
    <location>
        <begin position="1"/>
        <end position="236"/>
    </location>
</feature>
<feature type="region of interest" description="Linker" evidence="1">
    <location>
        <begin position="237"/>
        <end position="257"/>
    </location>
</feature>
<feature type="region of interest" description="N-acetyltransferase" evidence="1">
    <location>
        <begin position="258"/>
        <end position="466"/>
    </location>
</feature>
<feature type="active site" description="Proton acceptor" evidence="1">
    <location>
        <position position="370"/>
    </location>
</feature>
<feature type="binding site" evidence="1">
    <location>
        <begin position="13"/>
        <end position="16"/>
    </location>
    <ligand>
        <name>UDP-N-acetyl-alpha-D-glucosamine</name>
        <dbReference type="ChEBI" id="CHEBI:57705"/>
    </ligand>
</feature>
<feature type="binding site" evidence="1">
    <location>
        <position position="27"/>
    </location>
    <ligand>
        <name>UDP-N-acetyl-alpha-D-glucosamine</name>
        <dbReference type="ChEBI" id="CHEBI:57705"/>
    </ligand>
</feature>
<feature type="binding site" evidence="1">
    <location>
        <position position="79"/>
    </location>
    <ligand>
        <name>UDP-N-acetyl-alpha-D-glucosamine</name>
        <dbReference type="ChEBI" id="CHEBI:57705"/>
    </ligand>
</feature>
<feature type="binding site" evidence="1">
    <location>
        <begin position="84"/>
        <end position="85"/>
    </location>
    <ligand>
        <name>UDP-N-acetyl-alpha-D-glucosamine</name>
        <dbReference type="ChEBI" id="CHEBI:57705"/>
    </ligand>
</feature>
<feature type="binding site" evidence="1">
    <location>
        <begin position="107"/>
        <end position="109"/>
    </location>
    <ligand>
        <name>UDP-N-acetyl-alpha-D-glucosamine</name>
        <dbReference type="ChEBI" id="CHEBI:57705"/>
    </ligand>
</feature>
<feature type="binding site" evidence="1">
    <location>
        <position position="109"/>
    </location>
    <ligand>
        <name>Mg(2+)</name>
        <dbReference type="ChEBI" id="CHEBI:18420"/>
    </ligand>
</feature>
<feature type="binding site" evidence="1">
    <location>
        <position position="146"/>
    </location>
    <ligand>
        <name>UDP-N-acetyl-alpha-D-glucosamine</name>
        <dbReference type="ChEBI" id="CHEBI:57705"/>
    </ligand>
</feature>
<feature type="binding site" evidence="1">
    <location>
        <position position="161"/>
    </location>
    <ligand>
        <name>UDP-N-acetyl-alpha-D-glucosamine</name>
        <dbReference type="ChEBI" id="CHEBI:57705"/>
    </ligand>
</feature>
<feature type="binding site" evidence="1">
    <location>
        <position position="176"/>
    </location>
    <ligand>
        <name>UDP-N-acetyl-alpha-D-glucosamine</name>
        <dbReference type="ChEBI" id="CHEBI:57705"/>
    </ligand>
</feature>
<feature type="binding site" evidence="1">
    <location>
        <position position="234"/>
    </location>
    <ligand>
        <name>Mg(2+)</name>
        <dbReference type="ChEBI" id="CHEBI:18420"/>
    </ligand>
</feature>
<feature type="binding site" evidence="1">
    <location>
        <position position="234"/>
    </location>
    <ligand>
        <name>UDP-N-acetyl-alpha-D-glucosamine</name>
        <dbReference type="ChEBI" id="CHEBI:57705"/>
    </ligand>
</feature>
<feature type="binding site" evidence="1">
    <location>
        <position position="340"/>
    </location>
    <ligand>
        <name>UDP-N-acetyl-alpha-D-glucosamine</name>
        <dbReference type="ChEBI" id="CHEBI:57705"/>
    </ligand>
</feature>
<feature type="binding site" evidence="1">
    <location>
        <position position="358"/>
    </location>
    <ligand>
        <name>UDP-N-acetyl-alpha-D-glucosamine</name>
        <dbReference type="ChEBI" id="CHEBI:57705"/>
    </ligand>
</feature>
<feature type="binding site" evidence="1">
    <location>
        <position position="373"/>
    </location>
    <ligand>
        <name>UDP-N-acetyl-alpha-D-glucosamine</name>
        <dbReference type="ChEBI" id="CHEBI:57705"/>
    </ligand>
</feature>
<feature type="binding site" evidence="1">
    <location>
        <position position="384"/>
    </location>
    <ligand>
        <name>UDP-N-acetyl-alpha-D-glucosamine</name>
        <dbReference type="ChEBI" id="CHEBI:57705"/>
    </ligand>
</feature>
<feature type="binding site" evidence="1">
    <location>
        <position position="387"/>
    </location>
    <ligand>
        <name>acetyl-CoA</name>
        <dbReference type="ChEBI" id="CHEBI:57288"/>
    </ligand>
</feature>
<feature type="binding site" evidence="1">
    <location>
        <begin position="393"/>
        <end position="394"/>
    </location>
    <ligand>
        <name>acetyl-CoA</name>
        <dbReference type="ChEBI" id="CHEBI:57288"/>
    </ligand>
</feature>
<feature type="binding site" evidence="1">
    <location>
        <position position="412"/>
    </location>
    <ligand>
        <name>acetyl-CoA</name>
        <dbReference type="ChEBI" id="CHEBI:57288"/>
    </ligand>
</feature>
<feature type="binding site" evidence="1">
    <location>
        <position position="430"/>
    </location>
    <ligand>
        <name>acetyl-CoA</name>
        <dbReference type="ChEBI" id="CHEBI:57288"/>
    </ligand>
</feature>
<feature type="binding site" evidence="1">
    <location>
        <position position="447"/>
    </location>
    <ligand>
        <name>acetyl-CoA</name>
        <dbReference type="ChEBI" id="CHEBI:57288"/>
    </ligand>
</feature>
<reference key="1">
    <citation type="journal article" date="2009" name="Appl. Environ. Microbiol.">
        <title>Three genomes from the phylum Acidobacteria provide insight into the lifestyles of these microorganisms in soils.</title>
        <authorList>
            <person name="Ward N.L."/>
            <person name="Challacombe J.F."/>
            <person name="Janssen P.H."/>
            <person name="Henrissat B."/>
            <person name="Coutinho P.M."/>
            <person name="Wu M."/>
            <person name="Xie G."/>
            <person name="Haft D.H."/>
            <person name="Sait M."/>
            <person name="Badger J."/>
            <person name="Barabote R.D."/>
            <person name="Bradley B."/>
            <person name="Brettin T.S."/>
            <person name="Brinkac L.M."/>
            <person name="Bruce D."/>
            <person name="Creasy T."/>
            <person name="Daugherty S.C."/>
            <person name="Davidsen T.M."/>
            <person name="DeBoy R.T."/>
            <person name="Detter J.C."/>
            <person name="Dodson R.J."/>
            <person name="Durkin A.S."/>
            <person name="Ganapathy A."/>
            <person name="Gwinn-Giglio M."/>
            <person name="Han C.S."/>
            <person name="Khouri H."/>
            <person name="Kiss H."/>
            <person name="Kothari S.P."/>
            <person name="Madupu R."/>
            <person name="Nelson K.E."/>
            <person name="Nelson W.C."/>
            <person name="Paulsen I."/>
            <person name="Penn K."/>
            <person name="Ren Q."/>
            <person name="Rosovitz M.J."/>
            <person name="Selengut J.D."/>
            <person name="Shrivastava S."/>
            <person name="Sullivan S.A."/>
            <person name="Tapia R."/>
            <person name="Thompson L.S."/>
            <person name="Watkins K.L."/>
            <person name="Yang Q."/>
            <person name="Yu C."/>
            <person name="Zafar N."/>
            <person name="Zhou L."/>
            <person name="Kuske C.R."/>
        </authorList>
    </citation>
    <scope>NUCLEOTIDE SEQUENCE [LARGE SCALE GENOMIC DNA]</scope>
    <source>
        <strain>Ellin6076</strain>
    </source>
</reference>
<dbReference type="EC" id="2.7.7.23" evidence="1"/>
<dbReference type="EC" id="2.3.1.157" evidence="1"/>
<dbReference type="EMBL" id="CP000473">
    <property type="protein sequence ID" value="ABJ85326.1"/>
    <property type="molecule type" value="Genomic_DNA"/>
</dbReference>
<dbReference type="SMR" id="Q01YD9"/>
<dbReference type="FunCoup" id="Q01YD9">
    <property type="interactions" value="527"/>
</dbReference>
<dbReference type="STRING" id="234267.Acid_4364"/>
<dbReference type="KEGG" id="sus:Acid_4364"/>
<dbReference type="eggNOG" id="COG1207">
    <property type="taxonomic scope" value="Bacteria"/>
</dbReference>
<dbReference type="HOGENOM" id="CLU_029499_15_2_0"/>
<dbReference type="InParanoid" id="Q01YD9"/>
<dbReference type="OrthoDB" id="9775031at2"/>
<dbReference type="UniPathway" id="UPA00113">
    <property type="reaction ID" value="UER00532"/>
</dbReference>
<dbReference type="UniPathway" id="UPA00113">
    <property type="reaction ID" value="UER00533"/>
</dbReference>
<dbReference type="UniPathway" id="UPA00973"/>
<dbReference type="GO" id="GO:0005737">
    <property type="term" value="C:cytoplasm"/>
    <property type="evidence" value="ECO:0007669"/>
    <property type="project" value="UniProtKB-SubCell"/>
</dbReference>
<dbReference type="GO" id="GO:0016020">
    <property type="term" value="C:membrane"/>
    <property type="evidence" value="ECO:0007669"/>
    <property type="project" value="GOC"/>
</dbReference>
<dbReference type="GO" id="GO:0019134">
    <property type="term" value="F:glucosamine-1-phosphate N-acetyltransferase activity"/>
    <property type="evidence" value="ECO:0007669"/>
    <property type="project" value="UniProtKB-UniRule"/>
</dbReference>
<dbReference type="GO" id="GO:0000287">
    <property type="term" value="F:magnesium ion binding"/>
    <property type="evidence" value="ECO:0007669"/>
    <property type="project" value="UniProtKB-UniRule"/>
</dbReference>
<dbReference type="GO" id="GO:0003977">
    <property type="term" value="F:UDP-N-acetylglucosamine diphosphorylase activity"/>
    <property type="evidence" value="ECO:0007669"/>
    <property type="project" value="UniProtKB-UniRule"/>
</dbReference>
<dbReference type="GO" id="GO:0000902">
    <property type="term" value="P:cell morphogenesis"/>
    <property type="evidence" value="ECO:0007669"/>
    <property type="project" value="UniProtKB-UniRule"/>
</dbReference>
<dbReference type="GO" id="GO:0071555">
    <property type="term" value="P:cell wall organization"/>
    <property type="evidence" value="ECO:0007669"/>
    <property type="project" value="UniProtKB-KW"/>
</dbReference>
<dbReference type="GO" id="GO:0009245">
    <property type="term" value="P:lipid A biosynthetic process"/>
    <property type="evidence" value="ECO:0007669"/>
    <property type="project" value="UniProtKB-UniRule"/>
</dbReference>
<dbReference type="GO" id="GO:0009252">
    <property type="term" value="P:peptidoglycan biosynthetic process"/>
    <property type="evidence" value="ECO:0007669"/>
    <property type="project" value="UniProtKB-UniRule"/>
</dbReference>
<dbReference type="GO" id="GO:0008360">
    <property type="term" value="P:regulation of cell shape"/>
    <property type="evidence" value="ECO:0007669"/>
    <property type="project" value="UniProtKB-KW"/>
</dbReference>
<dbReference type="GO" id="GO:0006048">
    <property type="term" value="P:UDP-N-acetylglucosamine biosynthetic process"/>
    <property type="evidence" value="ECO:0007669"/>
    <property type="project" value="UniProtKB-UniPathway"/>
</dbReference>
<dbReference type="CDD" id="cd02540">
    <property type="entry name" value="GT2_GlmU_N_bac"/>
    <property type="match status" value="1"/>
</dbReference>
<dbReference type="CDD" id="cd03353">
    <property type="entry name" value="LbH_GlmU_C"/>
    <property type="match status" value="1"/>
</dbReference>
<dbReference type="Gene3D" id="2.160.10.10">
    <property type="entry name" value="Hexapeptide repeat proteins"/>
    <property type="match status" value="1"/>
</dbReference>
<dbReference type="Gene3D" id="3.90.550.10">
    <property type="entry name" value="Spore Coat Polysaccharide Biosynthesis Protein SpsA, Chain A"/>
    <property type="match status" value="1"/>
</dbReference>
<dbReference type="HAMAP" id="MF_01631">
    <property type="entry name" value="GlmU"/>
    <property type="match status" value="1"/>
</dbReference>
<dbReference type="InterPro" id="IPR005882">
    <property type="entry name" value="Bifunctional_GlmU"/>
</dbReference>
<dbReference type="InterPro" id="IPR050065">
    <property type="entry name" value="GlmU-like"/>
</dbReference>
<dbReference type="InterPro" id="IPR038009">
    <property type="entry name" value="GlmU_C_LbH"/>
</dbReference>
<dbReference type="InterPro" id="IPR001451">
    <property type="entry name" value="Hexapep"/>
</dbReference>
<dbReference type="InterPro" id="IPR018357">
    <property type="entry name" value="Hexapep_transf_CS"/>
</dbReference>
<dbReference type="InterPro" id="IPR025877">
    <property type="entry name" value="MobA-like_NTP_Trfase"/>
</dbReference>
<dbReference type="InterPro" id="IPR029044">
    <property type="entry name" value="Nucleotide-diphossugar_trans"/>
</dbReference>
<dbReference type="InterPro" id="IPR011004">
    <property type="entry name" value="Trimer_LpxA-like_sf"/>
</dbReference>
<dbReference type="NCBIfam" id="TIGR01173">
    <property type="entry name" value="glmU"/>
    <property type="match status" value="1"/>
</dbReference>
<dbReference type="PANTHER" id="PTHR43584:SF3">
    <property type="entry name" value="BIFUNCTIONAL PROTEIN GLMU"/>
    <property type="match status" value="1"/>
</dbReference>
<dbReference type="PANTHER" id="PTHR43584">
    <property type="entry name" value="NUCLEOTIDYL TRANSFERASE"/>
    <property type="match status" value="1"/>
</dbReference>
<dbReference type="Pfam" id="PF00132">
    <property type="entry name" value="Hexapep"/>
    <property type="match status" value="1"/>
</dbReference>
<dbReference type="Pfam" id="PF14602">
    <property type="entry name" value="Hexapep_2"/>
    <property type="match status" value="1"/>
</dbReference>
<dbReference type="Pfam" id="PF12804">
    <property type="entry name" value="NTP_transf_3"/>
    <property type="match status" value="1"/>
</dbReference>
<dbReference type="SUPFAM" id="SSF53448">
    <property type="entry name" value="Nucleotide-diphospho-sugar transferases"/>
    <property type="match status" value="1"/>
</dbReference>
<dbReference type="SUPFAM" id="SSF51161">
    <property type="entry name" value="Trimeric LpxA-like enzymes"/>
    <property type="match status" value="1"/>
</dbReference>
<dbReference type="PROSITE" id="PS00101">
    <property type="entry name" value="HEXAPEP_TRANSFERASES"/>
    <property type="match status" value="1"/>
</dbReference>
<evidence type="ECO:0000255" key="1">
    <source>
        <dbReference type="HAMAP-Rule" id="MF_01631"/>
    </source>
</evidence>
<comment type="function">
    <text evidence="1">Catalyzes the last two sequential reactions in the de novo biosynthetic pathway for UDP-N-acetylglucosamine (UDP-GlcNAc). The C-terminal domain catalyzes the transfer of acetyl group from acetyl coenzyme A to glucosamine-1-phosphate (GlcN-1-P) to produce N-acetylglucosamine-1-phosphate (GlcNAc-1-P), which is converted into UDP-GlcNAc by the transfer of uridine 5-monophosphate (from uridine 5-triphosphate), a reaction catalyzed by the N-terminal domain.</text>
</comment>
<comment type="catalytic activity">
    <reaction evidence="1">
        <text>alpha-D-glucosamine 1-phosphate + acetyl-CoA = N-acetyl-alpha-D-glucosamine 1-phosphate + CoA + H(+)</text>
        <dbReference type="Rhea" id="RHEA:13725"/>
        <dbReference type="ChEBI" id="CHEBI:15378"/>
        <dbReference type="ChEBI" id="CHEBI:57287"/>
        <dbReference type="ChEBI" id="CHEBI:57288"/>
        <dbReference type="ChEBI" id="CHEBI:57776"/>
        <dbReference type="ChEBI" id="CHEBI:58516"/>
        <dbReference type="EC" id="2.3.1.157"/>
    </reaction>
</comment>
<comment type="catalytic activity">
    <reaction evidence="1">
        <text>N-acetyl-alpha-D-glucosamine 1-phosphate + UTP + H(+) = UDP-N-acetyl-alpha-D-glucosamine + diphosphate</text>
        <dbReference type="Rhea" id="RHEA:13509"/>
        <dbReference type="ChEBI" id="CHEBI:15378"/>
        <dbReference type="ChEBI" id="CHEBI:33019"/>
        <dbReference type="ChEBI" id="CHEBI:46398"/>
        <dbReference type="ChEBI" id="CHEBI:57705"/>
        <dbReference type="ChEBI" id="CHEBI:57776"/>
        <dbReference type="EC" id="2.7.7.23"/>
    </reaction>
</comment>
<comment type="cofactor">
    <cofactor evidence="1">
        <name>Mg(2+)</name>
        <dbReference type="ChEBI" id="CHEBI:18420"/>
    </cofactor>
    <text evidence="1">Binds 1 Mg(2+) ion per subunit.</text>
</comment>
<comment type="pathway">
    <text evidence="1">Nucleotide-sugar biosynthesis; UDP-N-acetyl-alpha-D-glucosamine biosynthesis; N-acetyl-alpha-D-glucosamine 1-phosphate from alpha-D-glucosamine 6-phosphate (route II): step 2/2.</text>
</comment>
<comment type="pathway">
    <text evidence="1">Nucleotide-sugar biosynthesis; UDP-N-acetyl-alpha-D-glucosamine biosynthesis; UDP-N-acetyl-alpha-D-glucosamine from N-acetyl-alpha-D-glucosamine 1-phosphate: step 1/1.</text>
</comment>
<comment type="pathway">
    <text evidence="1">Bacterial outer membrane biogenesis; LPS lipid A biosynthesis.</text>
</comment>
<comment type="subunit">
    <text evidence="1">Homotrimer.</text>
</comment>
<comment type="subcellular location">
    <subcellularLocation>
        <location evidence="1">Cytoplasm</location>
    </subcellularLocation>
</comment>
<comment type="similarity">
    <text evidence="1">In the N-terminal section; belongs to the N-acetylglucosamine-1-phosphate uridyltransferase family.</text>
</comment>
<comment type="similarity">
    <text evidence="1">In the C-terminal section; belongs to the transferase hexapeptide repeat family.</text>
</comment>
<accession>Q01YD9</accession>
<keyword id="KW-0012">Acyltransferase</keyword>
<keyword id="KW-0133">Cell shape</keyword>
<keyword id="KW-0961">Cell wall biogenesis/degradation</keyword>
<keyword id="KW-0963">Cytoplasm</keyword>
<keyword id="KW-0460">Magnesium</keyword>
<keyword id="KW-0479">Metal-binding</keyword>
<keyword id="KW-0511">Multifunctional enzyme</keyword>
<keyword id="KW-0548">Nucleotidyltransferase</keyword>
<keyword id="KW-0573">Peptidoglycan synthesis</keyword>
<keyword id="KW-0677">Repeat</keyword>
<keyword id="KW-0808">Transferase</keyword>